<sequence length="162" mass="17415">MAPIAVGDVLPDGKLAYFDEQDQLQEVSVHSLVAGKKVILFGVPGAFTPTCSLKHVPGFIEKAGELKSKGVTEILCISVNDPFVMKAWAKSYPENKHVKFLADGSATYTHALGLELNLQEKGLGTRSRRFALLVDDLKVKAANIEGGGEFTVSSADDILKDL</sequence>
<keyword id="KW-0002">3D-structure</keyword>
<keyword id="KW-0049">Antioxidant</keyword>
<keyword id="KW-0560">Oxidoreductase</keyword>
<keyword id="KW-0575">Peroxidase</keyword>
<keyword id="KW-0676">Redox-active center</keyword>
<comment type="function">
    <text evidence="4 7">Thiol-specific peroxidase that catalyzes the reduction of hydrogen peroxide and organic hydroperoxides to water and alcohols, respectively. Can reduce H(2)O(2) and short chain organic, fatty acid, and phospholipid hydroperoxides. Plays a role in cell protection against oxidative stress by detoxifying peroxides.</text>
</comment>
<comment type="catalytic activity">
    <reaction evidence="2 4">
        <text>[glutaredoxin]-dithiol + a hydroperoxide = [glutaredoxin]-disulfide + an alcohol + H2O</text>
        <dbReference type="Rhea" id="RHEA:62624"/>
        <dbReference type="Rhea" id="RHEA-COMP:10729"/>
        <dbReference type="Rhea" id="RHEA-COMP:10730"/>
        <dbReference type="ChEBI" id="CHEBI:15377"/>
        <dbReference type="ChEBI" id="CHEBI:29950"/>
        <dbReference type="ChEBI" id="CHEBI:30879"/>
        <dbReference type="ChEBI" id="CHEBI:35924"/>
        <dbReference type="ChEBI" id="CHEBI:50058"/>
        <dbReference type="EC" id="1.11.1.25"/>
    </reaction>
</comment>
<comment type="biophysicochemical properties">
    <kinetics>
        <KM evidence="4">50 uM for phosphatidylcholine hydroperoxide</KM>
    </kinetics>
</comment>
<comment type="subunit">
    <text evidence="2 5 6">Monomer (PubMed:11706208, PubMed:15697201). Homodimer (PubMed:15697201, PubMed:16916801). Glutathionylation of C(P) causes the dimer to dissociate. Subsequent reduction of the mixed disulfide bond leads again to dimerization (PubMed:16916801).</text>
</comment>
<comment type="miscellaneous">
    <text evidence="11 13">The active site is a conserved redox-active cysteine residue, the peroxidatic cysteine (C(P)), which makes the nucleophilic attack on the peroxide substrate. The peroxide oxidizes the C(P)-SH to cysteine sulfenic acid (C(P)-SOH), which then reacts with another cysteine residue, the resolving cysteine (C(R)), to form a disulfide bridge. The disulfide is subsequently reduced by an appropriate electron donor to complete the catalytic cycle. In this 1-Cys peroxiredoxin, no C(R) is present and C(P) instead forms a disulfide with a cysteine from another protein or with a small thiol molecule. C(P) is reactivated by glutathionylation and subsequent reduction by glutaredoxin (Grx), or by thioredoxin (Trx). Preferentially uses glutaredoxin.</text>
</comment>
<comment type="similarity">
    <text evidence="10">Belongs to the peroxiredoxin family. Prx5 subfamily.</text>
</comment>
<protein>
    <recommendedName>
        <fullName evidence="10">Peroxiredoxin-2</fullName>
        <shortName>Prx</shortName>
        <ecNumber evidence="2 4">1.11.1.25</ecNumber>
    </recommendedName>
    <alternativeName>
        <fullName evidence="9">1-Cys D-peroxiredoxin</fullName>
    </alternativeName>
    <alternativeName>
        <fullName evidence="10">Glutaredoxin-dependent peroxiredoxin</fullName>
    </alternativeName>
    <alternativeName>
        <fullName evidence="8">Peroxiredoxin II</fullName>
    </alternativeName>
    <alternativeName>
        <fullName>Thioredoxin peroxidase</fullName>
    </alternativeName>
</protein>
<evidence type="ECO:0000255" key="1">
    <source>
        <dbReference type="PROSITE-ProRule" id="PRU00691"/>
    </source>
</evidence>
<evidence type="ECO:0000269" key="2">
    <source>
    </source>
</evidence>
<evidence type="ECO:0000269" key="3">
    <source>
    </source>
</evidence>
<evidence type="ECO:0000269" key="4">
    <source>
    </source>
</evidence>
<evidence type="ECO:0000269" key="5">
    <source>
    </source>
</evidence>
<evidence type="ECO:0000269" key="6">
    <source>
    </source>
</evidence>
<evidence type="ECO:0000269" key="7">
    <source>
    </source>
</evidence>
<evidence type="ECO:0000303" key="8">
    <source>
    </source>
</evidence>
<evidence type="ECO:0000303" key="9">
    <source>
    </source>
</evidence>
<evidence type="ECO:0000305" key="10"/>
<evidence type="ECO:0000305" key="11">
    <source>
    </source>
</evidence>
<evidence type="ECO:0000305" key="12">
    <source>
    </source>
</evidence>
<evidence type="ECO:0000305" key="13">
    <source>
    </source>
</evidence>
<evidence type="ECO:0007744" key="14">
    <source>
        <dbReference type="PDB" id="1TP9"/>
    </source>
</evidence>
<evidence type="ECO:0007829" key="15">
    <source>
        <dbReference type="PDB" id="1TP9"/>
    </source>
</evidence>
<name>PRX2_POPTR</name>
<organism>
    <name type="scientific">Populus trichocarpa</name>
    <name type="common">Western balsam poplar</name>
    <name type="synonym">Populus balsamifera subsp. trichocarpa</name>
    <dbReference type="NCBI Taxonomy" id="3694"/>
    <lineage>
        <taxon>Eukaryota</taxon>
        <taxon>Viridiplantae</taxon>
        <taxon>Streptophyta</taxon>
        <taxon>Embryophyta</taxon>
        <taxon>Tracheophyta</taxon>
        <taxon>Spermatophyta</taxon>
        <taxon>Magnoliopsida</taxon>
        <taxon>eudicotyledons</taxon>
        <taxon>Gunneridae</taxon>
        <taxon>Pentapetalae</taxon>
        <taxon>rosids</taxon>
        <taxon>fabids</taxon>
        <taxon>Malpighiales</taxon>
        <taxon>Salicaceae</taxon>
        <taxon>Saliceae</taxon>
        <taxon>Populus</taxon>
    </lineage>
</organism>
<reference key="1">
    <citation type="journal article" date="2008" name="BMC Genomics">
        <title>Analysis of 4,664 high-quality sequence-finished poplar full-length cDNA clones and their utility for the discovery of genes responding to insect feeding.</title>
        <authorList>
            <person name="Ralph S.G."/>
            <person name="Chun H.J."/>
            <person name="Cooper D."/>
            <person name="Kirkpatrick R."/>
            <person name="Kolosova N."/>
            <person name="Gunter L."/>
            <person name="Tuskan G.A."/>
            <person name="Douglas C.J."/>
            <person name="Holt R.A."/>
            <person name="Jones S.J."/>
            <person name="Marra M.A."/>
            <person name="Bohlmann J."/>
        </authorList>
    </citation>
    <scope>NUCLEOTIDE SEQUENCE [LARGE SCALE MRNA]</scope>
</reference>
<reference key="2">
    <citation type="journal article" date="2001" name="Plant Physiol.">
        <title>Isolation and characterization of a new peroxiredoxin from poplar sieve tubes that uses either glutaredoxin or thioredoxin as a proton donor.</title>
        <authorList>
            <person name="Rouhier N."/>
            <person name="Gelhaye E."/>
            <person name="Sautiere P.E."/>
            <person name="Brun A."/>
            <person name="Laurent P."/>
            <person name="Tagu D."/>
            <person name="Gerard J."/>
            <person name="de Fay E."/>
            <person name="Meyer Y."/>
            <person name="Jacquot J.P."/>
        </authorList>
    </citation>
    <scope>FUNCTION</scope>
    <scope>CATALYTIC ACTIVITY</scope>
    <scope>SUBUNIT</scope>
</reference>
<reference key="3">
    <citation type="journal article" date="2002" name="J. Biol. Chem.">
        <title>Glutaredoxin-dependent peroxiredoxin from poplar: protein-protein interaction and catalytic mechanism.</title>
        <authorList>
            <person name="Rouhier N."/>
            <person name="Gelhaye E."/>
            <person name="Jacquot J.P."/>
        </authorList>
    </citation>
    <scope>ACTIVE SITE</scope>
    <scope>MUTAGENESIS OF CYS-51 AND CYS-76</scope>
</reference>
<reference key="4">
    <citation type="journal article" date="2004" name="Physiol. Plantarum">
        <title>Active site mutagenesis and phospholipid hydroperoxide reductase activity of poplar type II peroxiredoxin.</title>
        <authorList>
            <person name="Rouhier N."/>
            <person name="Gelhaye E."/>
            <person name="Corbier C."/>
            <person name="Jacquot J.P."/>
        </authorList>
    </citation>
    <scope>FUNCTION</scope>
    <scope>CATALYTIC ACTIVITY</scope>
    <scope>BIOPHYSICOCHEMICAL PROPERTIES</scope>
    <scope>MUTAGENESIS OF THR-48 AND ARG-129</scope>
</reference>
<reference key="5">
    <citation type="journal article" date="2006" name="J. Biol. Chem.">
        <title>Glutathionylation induces the dissociation of 1-Cys D-peroxiredoxin non-covalent homodimer.</title>
        <authorList>
            <person name="Noguera-Mazon V."/>
            <person name="Lemoine J."/>
            <person name="Walker O."/>
            <person name="Rouhier N."/>
            <person name="Salvador A."/>
            <person name="Jacquot J.P."/>
            <person name="Lancelin J.M."/>
            <person name="Krimm I."/>
        </authorList>
    </citation>
    <scope>SUBUNIT</scope>
</reference>
<reference evidence="14" key="6">
    <citation type="journal article" date="2005" name="Biochemistry">
        <title>Crystal structure and solution NMR dynamics of a D (type II) peroxiredoxin glutaredoxin and thioredoxin dependent: a new insight into the peroxiredoxin oligomerism.</title>
        <authorList>
            <person name="Echalier A."/>
            <person name="Trivelli X."/>
            <person name="Corbier C."/>
            <person name="Rouhier N."/>
            <person name="Walker O."/>
            <person name="Tsan P."/>
            <person name="Jacquot J.P."/>
            <person name="Aubry A."/>
            <person name="Krimm I."/>
            <person name="Lancelin J.M."/>
        </authorList>
    </citation>
    <scope>X-RAY CRYSTALLOGRAPHY (1.62 ANGSTROMS)</scope>
    <scope>SUBUNIT</scope>
</reference>
<accession>A9PCL4</accession>
<feature type="chain" id="PRO_0000441073" description="Peroxiredoxin-2">
    <location>
        <begin position="1"/>
        <end position="162"/>
    </location>
</feature>
<feature type="domain" description="Thioredoxin" evidence="1">
    <location>
        <begin position="4"/>
        <end position="162"/>
    </location>
</feature>
<feature type="active site" description="Cysteine sulfenic acid (-SOH) intermediate" evidence="3 12">
    <location>
        <position position="51"/>
    </location>
</feature>
<feature type="mutagenesis site" description="Reduces catalytic activity to less than 4%." evidence="3">
    <original>T</original>
    <variation>V</variation>
    <location>
        <position position="48"/>
    </location>
</feature>
<feature type="mutagenesis site" description="Abolishes catalytic activity." evidence="3">
    <original>C</original>
    <variation>A</variation>
    <location>
        <position position="51"/>
    </location>
</feature>
<feature type="mutagenesis site" description="Reduces catalytic activity by 75%." evidence="3">
    <original>C</original>
    <variation>A</variation>
    <location>
        <position position="76"/>
    </location>
</feature>
<feature type="mutagenesis site" description="Reduces catalytic activity to less than 4%." evidence="3">
    <original>R</original>
    <variation>Q</variation>
    <location>
        <position position="129"/>
    </location>
</feature>
<feature type="strand" evidence="15">
    <location>
        <begin position="14"/>
        <end position="18"/>
    </location>
</feature>
<feature type="strand" evidence="15">
    <location>
        <begin position="24"/>
        <end position="29"/>
    </location>
</feature>
<feature type="helix" evidence="15">
    <location>
        <begin position="30"/>
        <end position="33"/>
    </location>
</feature>
<feature type="strand" evidence="15">
    <location>
        <begin position="36"/>
        <end position="44"/>
    </location>
</feature>
<feature type="helix" evidence="15">
    <location>
        <begin position="49"/>
        <end position="53"/>
    </location>
</feature>
<feature type="helix" evidence="15">
    <location>
        <begin position="55"/>
        <end position="68"/>
    </location>
</feature>
<feature type="strand" evidence="15">
    <location>
        <begin position="74"/>
        <end position="80"/>
    </location>
</feature>
<feature type="helix" evidence="15">
    <location>
        <begin position="82"/>
        <end position="90"/>
    </location>
</feature>
<feature type="strand" evidence="15">
    <location>
        <begin position="96"/>
        <end position="102"/>
    </location>
</feature>
<feature type="helix" evidence="15">
    <location>
        <begin position="107"/>
        <end position="111"/>
    </location>
</feature>
<feature type="strand" evidence="15">
    <location>
        <begin position="115"/>
        <end position="118"/>
    </location>
</feature>
<feature type="turn" evidence="15">
    <location>
        <begin position="119"/>
        <end position="122"/>
    </location>
</feature>
<feature type="strand" evidence="15">
    <location>
        <begin position="123"/>
        <end position="127"/>
    </location>
</feature>
<feature type="strand" evidence="15">
    <location>
        <begin position="130"/>
        <end position="135"/>
    </location>
</feature>
<feature type="strand" evidence="15">
    <location>
        <begin position="138"/>
        <end position="144"/>
    </location>
</feature>
<feature type="strand" evidence="15">
    <location>
        <begin position="146"/>
        <end position="148"/>
    </location>
</feature>
<feature type="helix" evidence="15">
    <location>
        <begin position="155"/>
        <end position="159"/>
    </location>
</feature>
<proteinExistence type="evidence at protein level"/>
<dbReference type="EC" id="1.11.1.25" evidence="2 4"/>
<dbReference type="EMBL" id="EF146010">
    <property type="protein sequence ID" value="ABK94117.1"/>
    <property type="molecule type" value="mRNA"/>
</dbReference>
<dbReference type="PDB" id="1TP9">
    <property type="method" value="X-ray"/>
    <property type="resolution" value="1.62 A"/>
    <property type="chains" value="A/B/C/D=1-162"/>
</dbReference>
<dbReference type="PDBsum" id="1TP9"/>
<dbReference type="SMR" id="A9PCL4"/>
<dbReference type="eggNOG" id="KOG0541">
    <property type="taxonomic scope" value="Eukaryota"/>
</dbReference>
<dbReference type="BRENDA" id="1.11.1.24">
    <property type="organism ID" value="4982"/>
</dbReference>
<dbReference type="BRENDA" id="1.11.1.25">
    <property type="organism ID" value="4982"/>
</dbReference>
<dbReference type="EvolutionaryTrace" id="A9PCL4"/>
<dbReference type="ExpressionAtlas" id="A9PCL4">
    <property type="expression patterns" value="baseline and differential"/>
</dbReference>
<dbReference type="GO" id="GO:0008379">
    <property type="term" value="F:thioredoxin peroxidase activity"/>
    <property type="evidence" value="ECO:0007669"/>
    <property type="project" value="InterPro"/>
</dbReference>
<dbReference type="GO" id="GO:0034599">
    <property type="term" value="P:cellular response to oxidative stress"/>
    <property type="evidence" value="ECO:0007669"/>
    <property type="project" value="InterPro"/>
</dbReference>
<dbReference type="CDD" id="cd03013">
    <property type="entry name" value="PRX5_like"/>
    <property type="match status" value="1"/>
</dbReference>
<dbReference type="FunFam" id="3.40.30.10:FF:000020">
    <property type="entry name" value="Peroxiredoxin"/>
    <property type="match status" value="1"/>
</dbReference>
<dbReference type="Gene3D" id="3.40.30.10">
    <property type="entry name" value="Glutaredoxin"/>
    <property type="match status" value="1"/>
</dbReference>
<dbReference type="InterPro" id="IPR037944">
    <property type="entry name" value="PRX5-like"/>
</dbReference>
<dbReference type="InterPro" id="IPR013740">
    <property type="entry name" value="Redoxin"/>
</dbReference>
<dbReference type="InterPro" id="IPR036249">
    <property type="entry name" value="Thioredoxin-like_sf"/>
</dbReference>
<dbReference type="InterPro" id="IPR013766">
    <property type="entry name" value="Thioredoxin_domain"/>
</dbReference>
<dbReference type="PANTHER" id="PTHR10430">
    <property type="entry name" value="PEROXIREDOXIN"/>
    <property type="match status" value="1"/>
</dbReference>
<dbReference type="PANTHER" id="PTHR10430:SF8">
    <property type="entry name" value="PEROXIREDOXIN-2A-RELATED"/>
    <property type="match status" value="1"/>
</dbReference>
<dbReference type="Pfam" id="PF08534">
    <property type="entry name" value="Redoxin"/>
    <property type="match status" value="1"/>
</dbReference>
<dbReference type="SUPFAM" id="SSF52833">
    <property type="entry name" value="Thioredoxin-like"/>
    <property type="match status" value="1"/>
</dbReference>
<dbReference type="PROSITE" id="PS51352">
    <property type="entry name" value="THIOREDOXIN_2"/>
    <property type="match status" value="1"/>
</dbReference>